<gene>
    <name evidence="1" type="primary">gltX2</name>
    <name type="ordered locus">GDI2211</name>
    <name type="ordered locus">Gdia_0429</name>
</gene>
<accession>A9HLD9</accession>
<accession>B5ZCG1</accession>
<reference key="1">
    <citation type="journal article" date="2009" name="BMC Genomics">
        <title>Complete genome sequence of the sugarcane nitrogen-fixing endophyte Gluconacetobacter diazotrophicus Pal5.</title>
        <authorList>
            <person name="Bertalan M."/>
            <person name="Albano R."/>
            <person name="de Padua V."/>
            <person name="Rouws L."/>
            <person name="Rojas C."/>
            <person name="Hemerly A."/>
            <person name="Teixeira K."/>
            <person name="Schwab S."/>
            <person name="Araujo J."/>
            <person name="Oliveira A."/>
            <person name="Franca L."/>
            <person name="Magalhaes V."/>
            <person name="Alqueres S."/>
            <person name="Cardoso A."/>
            <person name="Almeida W."/>
            <person name="Loureiro M.M."/>
            <person name="Nogueira E."/>
            <person name="Cidade D."/>
            <person name="Oliveira D."/>
            <person name="Simao T."/>
            <person name="Macedo J."/>
            <person name="Valadao A."/>
            <person name="Dreschsel M."/>
            <person name="Freitas F."/>
            <person name="Vidal M."/>
            <person name="Guedes H."/>
            <person name="Rodrigues E."/>
            <person name="Meneses C."/>
            <person name="Brioso P."/>
            <person name="Pozzer L."/>
            <person name="Figueiredo D."/>
            <person name="Montano H."/>
            <person name="Junior J."/>
            <person name="de Souza Filho G."/>
            <person name="Martin Quintana Flores V."/>
            <person name="Ferreira B."/>
            <person name="Branco A."/>
            <person name="Gonzalez P."/>
            <person name="Guillobel H."/>
            <person name="Lemos M."/>
            <person name="Seibel L."/>
            <person name="Macedo J."/>
            <person name="Alves-Ferreira M."/>
            <person name="Sachetto-Martins G."/>
            <person name="Coelho A."/>
            <person name="Santos E."/>
            <person name="Amaral G."/>
            <person name="Neves A."/>
            <person name="Pacheco A.B."/>
            <person name="Carvalho D."/>
            <person name="Lery L."/>
            <person name="Bisch P."/>
            <person name="Rossle S.C."/>
            <person name="Urmenyi T."/>
            <person name="Rael Pereira A."/>
            <person name="Silva R."/>
            <person name="Rondinelli E."/>
            <person name="von Kruger W."/>
            <person name="Martins O."/>
            <person name="Baldani J.I."/>
            <person name="Ferreira P.C."/>
        </authorList>
    </citation>
    <scope>NUCLEOTIDE SEQUENCE [LARGE SCALE GENOMIC DNA]</scope>
    <source>
        <strain>ATCC 49037 / DSM 5601 / CCUG 37298 / CIP 103539 / LMG 7603 / PAl5</strain>
    </source>
</reference>
<reference key="2">
    <citation type="journal article" date="2010" name="Stand. Genomic Sci.">
        <title>Two genome sequences of the same bacterial strain, Gluconacetobacter diazotrophicus PAl 5, suggest a new standard in genome sequence submission.</title>
        <authorList>
            <person name="Giongo A."/>
            <person name="Tyler H.L."/>
            <person name="Zipperer U.N."/>
            <person name="Triplett E.W."/>
        </authorList>
    </citation>
    <scope>NUCLEOTIDE SEQUENCE [LARGE SCALE GENOMIC DNA]</scope>
    <source>
        <strain>ATCC 49037 / DSM 5601 / CCUG 37298 / CIP 103539 / LMG 7603 / PAl5</strain>
    </source>
</reference>
<sequence length="443" mass="49680">MKLRFAPSPTGLIHVGNARQAIANALYARRHGGTFQLRIDDTDRERSRDEYVDALHTDLAWLGITWDETFRQSDRLDRYAAAIETLKASGRLYPCFESEQELASKREARIRMRKPPIYDRAMLRMTAEQRAQAEANGKVPYWRFRLSDQDRGVDDMVMGRSQVKLQSISDPVLVRADGTVLYTLASVVDDMETGVTHVLRGEDHLTNTGVQIDIAEALGGKVGQFAFAHLPLLLDEAGGKLSKRFDGLSIRALRQDGIDPVAIVSYLARLGSADDPAPLSFDDLAASYDVRRVSRSAARFDMRQLLALNRRVMHQMPFGAIRDRLPEGATEAFWMAVRGNVDMVSELRHWWDVVGGVIVPPVQDDEGAYLLQALALLPPEPWDAQTWKDWTTAVRDATGRSGKSVFHPLRVALTGEEEGPEMRDLLPLMGHDRVAERLRIAAR</sequence>
<comment type="function">
    <text evidence="1">Catalyzes the attachment of glutamate to tRNA(Glu) in a two-step reaction: glutamate is first activated by ATP to form Glu-AMP and then transferred to the acceptor end of tRNA(Glu).</text>
</comment>
<comment type="catalytic activity">
    <reaction evidence="1">
        <text>tRNA(Glu) + L-glutamate + ATP = L-glutamyl-tRNA(Glu) + AMP + diphosphate</text>
        <dbReference type="Rhea" id="RHEA:23540"/>
        <dbReference type="Rhea" id="RHEA-COMP:9663"/>
        <dbReference type="Rhea" id="RHEA-COMP:9680"/>
        <dbReference type="ChEBI" id="CHEBI:29985"/>
        <dbReference type="ChEBI" id="CHEBI:30616"/>
        <dbReference type="ChEBI" id="CHEBI:33019"/>
        <dbReference type="ChEBI" id="CHEBI:78442"/>
        <dbReference type="ChEBI" id="CHEBI:78520"/>
        <dbReference type="ChEBI" id="CHEBI:456215"/>
        <dbReference type="EC" id="6.1.1.17"/>
    </reaction>
</comment>
<comment type="subunit">
    <text evidence="1">Monomer.</text>
</comment>
<comment type="subcellular location">
    <subcellularLocation>
        <location evidence="1">Cytoplasm</location>
    </subcellularLocation>
</comment>
<comment type="similarity">
    <text evidence="1">Belongs to the class-I aminoacyl-tRNA synthetase family. Glutamate--tRNA ligase type 1 subfamily.</text>
</comment>
<name>SYE2_GLUDA</name>
<evidence type="ECO:0000255" key="1">
    <source>
        <dbReference type="HAMAP-Rule" id="MF_00022"/>
    </source>
</evidence>
<evidence type="ECO:0000305" key="2"/>
<organism>
    <name type="scientific">Gluconacetobacter diazotrophicus (strain ATCC 49037 / DSM 5601 / CCUG 37298 / CIP 103539 / LMG 7603 / PAl5)</name>
    <dbReference type="NCBI Taxonomy" id="272568"/>
    <lineage>
        <taxon>Bacteria</taxon>
        <taxon>Pseudomonadati</taxon>
        <taxon>Pseudomonadota</taxon>
        <taxon>Alphaproteobacteria</taxon>
        <taxon>Acetobacterales</taxon>
        <taxon>Acetobacteraceae</taxon>
        <taxon>Gluconacetobacter</taxon>
    </lineage>
</organism>
<keyword id="KW-0030">Aminoacyl-tRNA synthetase</keyword>
<keyword id="KW-0067">ATP-binding</keyword>
<keyword id="KW-0963">Cytoplasm</keyword>
<keyword id="KW-0436">Ligase</keyword>
<keyword id="KW-0547">Nucleotide-binding</keyword>
<keyword id="KW-0648">Protein biosynthesis</keyword>
<keyword id="KW-1185">Reference proteome</keyword>
<dbReference type="EC" id="6.1.1.17" evidence="1"/>
<dbReference type="EMBL" id="AM889285">
    <property type="protein sequence ID" value="CAP56154.1"/>
    <property type="molecule type" value="Genomic_DNA"/>
</dbReference>
<dbReference type="EMBL" id="CP001189">
    <property type="protein sequence ID" value="ACI50225.1"/>
    <property type="molecule type" value="Genomic_DNA"/>
</dbReference>
<dbReference type="RefSeq" id="WP_012226059.1">
    <property type="nucleotide sequence ID" value="NC_010125.1"/>
</dbReference>
<dbReference type="SMR" id="A9HLD9"/>
<dbReference type="STRING" id="272568.GDI2211"/>
<dbReference type="KEGG" id="gdi:GDI2211"/>
<dbReference type="KEGG" id="gdj:Gdia_0429"/>
<dbReference type="eggNOG" id="COG0008">
    <property type="taxonomic scope" value="Bacteria"/>
</dbReference>
<dbReference type="HOGENOM" id="CLU_015768_6_1_5"/>
<dbReference type="OrthoDB" id="9807503at2"/>
<dbReference type="Proteomes" id="UP000001176">
    <property type="component" value="Chromosome"/>
</dbReference>
<dbReference type="GO" id="GO:0005829">
    <property type="term" value="C:cytosol"/>
    <property type="evidence" value="ECO:0007669"/>
    <property type="project" value="TreeGrafter"/>
</dbReference>
<dbReference type="GO" id="GO:0005524">
    <property type="term" value="F:ATP binding"/>
    <property type="evidence" value="ECO:0007669"/>
    <property type="project" value="UniProtKB-UniRule"/>
</dbReference>
<dbReference type="GO" id="GO:0004818">
    <property type="term" value="F:glutamate-tRNA ligase activity"/>
    <property type="evidence" value="ECO:0007669"/>
    <property type="project" value="UniProtKB-UniRule"/>
</dbReference>
<dbReference type="GO" id="GO:0000049">
    <property type="term" value="F:tRNA binding"/>
    <property type="evidence" value="ECO:0007669"/>
    <property type="project" value="InterPro"/>
</dbReference>
<dbReference type="GO" id="GO:0006424">
    <property type="term" value="P:glutamyl-tRNA aminoacylation"/>
    <property type="evidence" value="ECO:0007669"/>
    <property type="project" value="UniProtKB-UniRule"/>
</dbReference>
<dbReference type="Gene3D" id="1.10.10.350">
    <property type="match status" value="1"/>
</dbReference>
<dbReference type="Gene3D" id="3.40.50.620">
    <property type="entry name" value="HUPs"/>
    <property type="match status" value="1"/>
</dbReference>
<dbReference type="HAMAP" id="MF_00022">
    <property type="entry name" value="Glu_tRNA_synth_type1"/>
    <property type="match status" value="1"/>
</dbReference>
<dbReference type="InterPro" id="IPR045462">
    <property type="entry name" value="aa-tRNA-synth_I_cd-bd"/>
</dbReference>
<dbReference type="InterPro" id="IPR020751">
    <property type="entry name" value="aa-tRNA-synth_I_codon-bd_sub2"/>
</dbReference>
<dbReference type="InterPro" id="IPR001412">
    <property type="entry name" value="aa-tRNA-synth_I_CS"/>
</dbReference>
<dbReference type="InterPro" id="IPR008925">
    <property type="entry name" value="aa_tRNA-synth_I_cd-bd_sf"/>
</dbReference>
<dbReference type="InterPro" id="IPR004527">
    <property type="entry name" value="Glu-tRNA-ligase_bac/mito"/>
</dbReference>
<dbReference type="InterPro" id="IPR000924">
    <property type="entry name" value="Glu/Gln-tRNA-synth"/>
</dbReference>
<dbReference type="InterPro" id="IPR020058">
    <property type="entry name" value="Glu/Gln-tRNA-synth_Ib_cat-dom"/>
</dbReference>
<dbReference type="InterPro" id="IPR049940">
    <property type="entry name" value="GluQ/Sye"/>
</dbReference>
<dbReference type="InterPro" id="IPR014729">
    <property type="entry name" value="Rossmann-like_a/b/a_fold"/>
</dbReference>
<dbReference type="NCBIfam" id="TIGR00464">
    <property type="entry name" value="gltX_bact"/>
    <property type="match status" value="1"/>
</dbReference>
<dbReference type="PANTHER" id="PTHR43311">
    <property type="entry name" value="GLUTAMATE--TRNA LIGASE"/>
    <property type="match status" value="1"/>
</dbReference>
<dbReference type="PANTHER" id="PTHR43311:SF2">
    <property type="entry name" value="GLUTAMATE--TRNA LIGASE, MITOCHONDRIAL-RELATED"/>
    <property type="match status" value="1"/>
</dbReference>
<dbReference type="Pfam" id="PF19269">
    <property type="entry name" value="Anticodon_2"/>
    <property type="match status" value="1"/>
</dbReference>
<dbReference type="Pfam" id="PF00749">
    <property type="entry name" value="tRNA-synt_1c"/>
    <property type="match status" value="1"/>
</dbReference>
<dbReference type="PRINTS" id="PR00987">
    <property type="entry name" value="TRNASYNTHGLU"/>
</dbReference>
<dbReference type="SUPFAM" id="SSF48163">
    <property type="entry name" value="An anticodon-binding domain of class I aminoacyl-tRNA synthetases"/>
    <property type="match status" value="1"/>
</dbReference>
<dbReference type="SUPFAM" id="SSF52374">
    <property type="entry name" value="Nucleotidylyl transferase"/>
    <property type="match status" value="1"/>
</dbReference>
<dbReference type="PROSITE" id="PS00178">
    <property type="entry name" value="AA_TRNA_LIGASE_I"/>
    <property type="match status" value="1"/>
</dbReference>
<proteinExistence type="inferred from homology"/>
<protein>
    <recommendedName>
        <fullName evidence="1">Glutamate--tRNA ligase 2</fullName>
        <ecNumber evidence="1">6.1.1.17</ecNumber>
    </recommendedName>
    <alternativeName>
        <fullName evidence="1">Glutamyl-tRNA synthetase 2</fullName>
        <shortName evidence="1">GluRS 2</shortName>
    </alternativeName>
</protein>
<feature type="chain" id="PRO_0000367676" description="Glutamate--tRNA ligase 2">
    <location>
        <begin position="1"/>
        <end position="443"/>
    </location>
</feature>
<feature type="short sequence motif" description="'HIGH' region" evidence="1">
    <location>
        <begin position="7"/>
        <end position="17"/>
    </location>
</feature>
<feature type="short sequence motif" description="'KMSKS' region" evidence="1">
    <location>
        <begin position="240"/>
        <end position="244"/>
    </location>
</feature>
<feature type="binding site" evidence="1">
    <location>
        <position position="243"/>
    </location>
    <ligand>
        <name>ATP</name>
        <dbReference type="ChEBI" id="CHEBI:30616"/>
    </ligand>
</feature>
<feature type="sequence conflict" description="In Ref. 2; ACI50225." evidence="2" ref="2">
    <original>QDRGV</original>
    <variation>RTVAW</variation>
    <location>
        <begin position="149"/>
        <end position="153"/>
    </location>
</feature>
<feature type="sequence conflict" description="In Ref. 2; ACI50225." evidence="2" ref="2">
    <original>E</original>
    <variation>K</variation>
    <location>
        <position position="418"/>
    </location>
</feature>